<name>YQGF_BACLD</name>
<dbReference type="EC" id="3.1.-.-" evidence="1"/>
<dbReference type="EMBL" id="AE017333">
    <property type="protein sequence ID" value="AAU41737.1"/>
    <property type="molecule type" value="Genomic_DNA"/>
</dbReference>
<dbReference type="EMBL" id="CP000002">
    <property type="protein sequence ID" value="AAU24373.1"/>
    <property type="molecule type" value="Genomic_DNA"/>
</dbReference>
<dbReference type="SMR" id="Q65GS7"/>
<dbReference type="STRING" id="279010.BL02031"/>
<dbReference type="KEGG" id="bld:BLi02867"/>
<dbReference type="KEGG" id="bli:BL02031"/>
<dbReference type="eggNOG" id="COG0816">
    <property type="taxonomic scope" value="Bacteria"/>
</dbReference>
<dbReference type="HOGENOM" id="CLU_098240_2_0_9"/>
<dbReference type="Proteomes" id="UP000000606">
    <property type="component" value="Chromosome"/>
</dbReference>
<dbReference type="GO" id="GO:0005829">
    <property type="term" value="C:cytosol"/>
    <property type="evidence" value="ECO:0007669"/>
    <property type="project" value="TreeGrafter"/>
</dbReference>
<dbReference type="GO" id="GO:0004518">
    <property type="term" value="F:nuclease activity"/>
    <property type="evidence" value="ECO:0007669"/>
    <property type="project" value="UniProtKB-KW"/>
</dbReference>
<dbReference type="GO" id="GO:0000967">
    <property type="term" value="P:rRNA 5'-end processing"/>
    <property type="evidence" value="ECO:0007669"/>
    <property type="project" value="UniProtKB-UniRule"/>
</dbReference>
<dbReference type="CDD" id="cd16964">
    <property type="entry name" value="YqgF"/>
    <property type="match status" value="1"/>
</dbReference>
<dbReference type="FunFam" id="3.30.420.140:FF:000003">
    <property type="entry name" value="Putative pre-16S rRNA nuclease"/>
    <property type="match status" value="1"/>
</dbReference>
<dbReference type="Gene3D" id="3.30.420.140">
    <property type="entry name" value="YqgF/RNase H-like domain"/>
    <property type="match status" value="1"/>
</dbReference>
<dbReference type="HAMAP" id="MF_00651">
    <property type="entry name" value="Nuclease_YqgF"/>
    <property type="match status" value="1"/>
</dbReference>
<dbReference type="InterPro" id="IPR012337">
    <property type="entry name" value="RNaseH-like_sf"/>
</dbReference>
<dbReference type="InterPro" id="IPR005227">
    <property type="entry name" value="YqgF"/>
</dbReference>
<dbReference type="InterPro" id="IPR006641">
    <property type="entry name" value="YqgF/RNaseH-like_dom"/>
</dbReference>
<dbReference type="InterPro" id="IPR037027">
    <property type="entry name" value="YqgF/RNaseH-like_dom_sf"/>
</dbReference>
<dbReference type="NCBIfam" id="TIGR00250">
    <property type="entry name" value="RNAse_H_YqgF"/>
    <property type="match status" value="1"/>
</dbReference>
<dbReference type="PANTHER" id="PTHR33317">
    <property type="entry name" value="POLYNUCLEOTIDYL TRANSFERASE, RIBONUCLEASE H-LIKE SUPERFAMILY PROTEIN"/>
    <property type="match status" value="1"/>
</dbReference>
<dbReference type="PANTHER" id="PTHR33317:SF4">
    <property type="entry name" value="POLYNUCLEOTIDYL TRANSFERASE, RIBONUCLEASE H-LIKE SUPERFAMILY PROTEIN"/>
    <property type="match status" value="1"/>
</dbReference>
<dbReference type="Pfam" id="PF03652">
    <property type="entry name" value="RuvX"/>
    <property type="match status" value="1"/>
</dbReference>
<dbReference type="SMART" id="SM00732">
    <property type="entry name" value="YqgFc"/>
    <property type="match status" value="1"/>
</dbReference>
<dbReference type="SUPFAM" id="SSF53098">
    <property type="entry name" value="Ribonuclease H-like"/>
    <property type="match status" value="1"/>
</dbReference>
<sequence length="139" mass="15293">MRILGLDLGSKTLGVALSDEMGWTAQGIETIKIDEAGGDYGLNRLAELTKDYVIDKIVLGFPKNMNGTVGPRGEASQKFAEVLEETFQVPVVLWDERLSTMAAERMLISADVSRQKRKKVIDKMAAVMILQGYLDSLNS</sequence>
<protein>
    <recommendedName>
        <fullName evidence="1">Putative pre-16S rRNA nuclease</fullName>
        <ecNumber evidence="1">3.1.-.-</ecNumber>
    </recommendedName>
</protein>
<organism>
    <name type="scientific">Bacillus licheniformis (strain ATCC 14580 / DSM 13 / JCM 2505 / CCUG 7422 / NBRC 12200 / NCIMB 9375 / NCTC 10341 / NRRL NRS-1264 / Gibson 46)</name>
    <dbReference type="NCBI Taxonomy" id="279010"/>
    <lineage>
        <taxon>Bacteria</taxon>
        <taxon>Bacillati</taxon>
        <taxon>Bacillota</taxon>
        <taxon>Bacilli</taxon>
        <taxon>Bacillales</taxon>
        <taxon>Bacillaceae</taxon>
        <taxon>Bacillus</taxon>
    </lineage>
</organism>
<keyword id="KW-0963">Cytoplasm</keyword>
<keyword id="KW-0378">Hydrolase</keyword>
<keyword id="KW-0540">Nuclease</keyword>
<keyword id="KW-1185">Reference proteome</keyword>
<keyword id="KW-0690">Ribosome biogenesis</keyword>
<gene>
    <name type="ordered locus">BLi02867</name>
    <name type="ordered locus">BL02031</name>
</gene>
<comment type="function">
    <text evidence="1">Could be a nuclease involved in processing of the 5'-end of pre-16S rRNA.</text>
</comment>
<comment type="subcellular location">
    <subcellularLocation>
        <location evidence="1">Cytoplasm</location>
    </subcellularLocation>
</comment>
<comment type="similarity">
    <text evidence="1">Belongs to the YqgF nuclease family.</text>
</comment>
<reference key="1">
    <citation type="journal article" date="2004" name="J. Mol. Microbiol. Biotechnol.">
        <title>The complete genome sequence of Bacillus licheniformis DSM13, an organism with great industrial potential.</title>
        <authorList>
            <person name="Veith B."/>
            <person name="Herzberg C."/>
            <person name="Steckel S."/>
            <person name="Feesche J."/>
            <person name="Maurer K.H."/>
            <person name="Ehrenreich P."/>
            <person name="Baeumer S."/>
            <person name="Henne A."/>
            <person name="Liesegang H."/>
            <person name="Merkl R."/>
            <person name="Ehrenreich A."/>
            <person name="Gottschalk G."/>
        </authorList>
    </citation>
    <scope>NUCLEOTIDE SEQUENCE [LARGE SCALE GENOMIC DNA]</scope>
    <source>
        <strain>ATCC 14580 / DSM 13 / JCM 2505 / CCUG 7422 / NBRC 12200 / NCIMB 9375 / NCTC 10341 / NRRL NRS-1264 / Gibson 46</strain>
    </source>
</reference>
<reference key="2">
    <citation type="journal article" date="2004" name="Genome Biol.">
        <title>Complete genome sequence of the industrial bacterium Bacillus licheniformis and comparisons with closely related Bacillus species.</title>
        <authorList>
            <person name="Rey M.W."/>
            <person name="Ramaiya P."/>
            <person name="Nelson B.A."/>
            <person name="Brody-Karpin S.D."/>
            <person name="Zaretsky E.J."/>
            <person name="Tang M."/>
            <person name="Lopez de Leon A."/>
            <person name="Xiang H."/>
            <person name="Gusti V."/>
            <person name="Clausen I.G."/>
            <person name="Olsen P.B."/>
            <person name="Rasmussen M.D."/>
            <person name="Andersen J.T."/>
            <person name="Joergensen P.L."/>
            <person name="Larsen T.S."/>
            <person name="Sorokin A."/>
            <person name="Bolotin A."/>
            <person name="Lapidus A."/>
            <person name="Galleron N."/>
            <person name="Ehrlich S.D."/>
            <person name="Berka R.M."/>
        </authorList>
    </citation>
    <scope>NUCLEOTIDE SEQUENCE [LARGE SCALE GENOMIC DNA]</scope>
    <source>
        <strain>ATCC 14580 / DSM 13 / JCM 2505 / CCUG 7422 / NBRC 12200 / NCIMB 9375 / NCTC 10341 / NRRL NRS-1264 / Gibson 46</strain>
    </source>
</reference>
<feature type="chain" id="PRO_0000172021" description="Putative pre-16S rRNA nuclease">
    <location>
        <begin position="1"/>
        <end position="139"/>
    </location>
</feature>
<proteinExistence type="inferred from homology"/>
<accession>Q65GS7</accession>
<accession>Q62S86</accession>
<evidence type="ECO:0000255" key="1">
    <source>
        <dbReference type="HAMAP-Rule" id="MF_00651"/>
    </source>
</evidence>